<feature type="chain" id="PRO_1000136730" description="Ribosome maturation factor RimP">
    <location>
        <begin position="1"/>
        <end position="156"/>
    </location>
</feature>
<reference key="1">
    <citation type="submission" date="2008-10" db="EMBL/GenBank/DDBJ databases">
        <title>Genome sequence of Bacillus cereus AH820.</title>
        <authorList>
            <person name="Dodson R.J."/>
            <person name="Durkin A.S."/>
            <person name="Rosovitz M.J."/>
            <person name="Rasko D.A."/>
            <person name="Hoffmaster A."/>
            <person name="Ravel J."/>
            <person name="Sutton G."/>
        </authorList>
    </citation>
    <scope>NUCLEOTIDE SEQUENCE [LARGE SCALE GENOMIC DNA]</scope>
    <source>
        <strain>AH820</strain>
    </source>
</reference>
<accession>B7JJ95</accession>
<evidence type="ECO:0000255" key="1">
    <source>
        <dbReference type="HAMAP-Rule" id="MF_01077"/>
    </source>
</evidence>
<gene>
    <name evidence="1" type="primary">rimP</name>
    <name type="ordered locus">BCAH820_3829</name>
</gene>
<name>RIMP_BACC0</name>
<keyword id="KW-0963">Cytoplasm</keyword>
<keyword id="KW-0690">Ribosome biogenesis</keyword>
<organism>
    <name type="scientific">Bacillus cereus (strain AH820)</name>
    <dbReference type="NCBI Taxonomy" id="405535"/>
    <lineage>
        <taxon>Bacteria</taxon>
        <taxon>Bacillati</taxon>
        <taxon>Bacillota</taxon>
        <taxon>Bacilli</taxon>
        <taxon>Bacillales</taxon>
        <taxon>Bacillaceae</taxon>
        <taxon>Bacillus</taxon>
        <taxon>Bacillus cereus group</taxon>
    </lineage>
</organism>
<comment type="function">
    <text evidence="1">Required for maturation of 30S ribosomal subunits.</text>
</comment>
<comment type="subcellular location">
    <subcellularLocation>
        <location evidence="1">Cytoplasm</location>
    </subcellularLocation>
</comment>
<comment type="similarity">
    <text evidence="1">Belongs to the RimP family.</text>
</comment>
<sequence>MDKKVTEVVEAFAQPIVEELNLELVDVEYVKEGQDWFLRVFIDSEKGVDIEECGAVSERLSEALDKEDPIPHLYFLDVSSPGAERPLKKEKDFQQAVGKQVAIKTYEPIDGEKMFEGKMLSYDGTTITLLLTIKTRKKEIQIPMDKVANARLAVTF</sequence>
<proteinExistence type="inferred from homology"/>
<protein>
    <recommendedName>
        <fullName evidence="1">Ribosome maturation factor RimP</fullName>
    </recommendedName>
</protein>
<dbReference type="EMBL" id="CP001283">
    <property type="protein sequence ID" value="ACK89342.1"/>
    <property type="molecule type" value="Genomic_DNA"/>
</dbReference>
<dbReference type="RefSeq" id="WP_000359097.1">
    <property type="nucleotide sequence ID" value="NC_011773.1"/>
</dbReference>
<dbReference type="SMR" id="B7JJ95"/>
<dbReference type="GeneID" id="93007295"/>
<dbReference type="KEGG" id="bcu:BCAH820_3829"/>
<dbReference type="HOGENOM" id="CLU_070525_2_0_9"/>
<dbReference type="Proteomes" id="UP000001363">
    <property type="component" value="Chromosome"/>
</dbReference>
<dbReference type="GO" id="GO:0005829">
    <property type="term" value="C:cytosol"/>
    <property type="evidence" value="ECO:0007669"/>
    <property type="project" value="TreeGrafter"/>
</dbReference>
<dbReference type="GO" id="GO:0000028">
    <property type="term" value="P:ribosomal small subunit assembly"/>
    <property type="evidence" value="ECO:0007669"/>
    <property type="project" value="TreeGrafter"/>
</dbReference>
<dbReference type="GO" id="GO:0006412">
    <property type="term" value="P:translation"/>
    <property type="evidence" value="ECO:0007669"/>
    <property type="project" value="TreeGrafter"/>
</dbReference>
<dbReference type="CDD" id="cd01734">
    <property type="entry name" value="YlxS_C"/>
    <property type="match status" value="1"/>
</dbReference>
<dbReference type="FunFam" id="2.30.30.180:FF:000002">
    <property type="entry name" value="Ribosome maturation factor RimP"/>
    <property type="match status" value="1"/>
</dbReference>
<dbReference type="FunFam" id="3.30.300.70:FF:000001">
    <property type="entry name" value="Ribosome maturation factor RimP"/>
    <property type="match status" value="1"/>
</dbReference>
<dbReference type="Gene3D" id="2.30.30.180">
    <property type="entry name" value="Ribosome maturation factor RimP, C-terminal domain"/>
    <property type="match status" value="1"/>
</dbReference>
<dbReference type="Gene3D" id="3.30.300.70">
    <property type="entry name" value="RimP-like superfamily, N-terminal"/>
    <property type="match status" value="1"/>
</dbReference>
<dbReference type="HAMAP" id="MF_01077">
    <property type="entry name" value="RimP"/>
    <property type="match status" value="1"/>
</dbReference>
<dbReference type="InterPro" id="IPR003728">
    <property type="entry name" value="Ribosome_maturation_RimP"/>
</dbReference>
<dbReference type="InterPro" id="IPR028998">
    <property type="entry name" value="RimP_C"/>
</dbReference>
<dbReference type="InterPro" id="IPR036847">
    <property type="entry name" value="RimP_C_sf"/>
</dbReference>
<dbReference type="InterPro" id="IPR028989">
    <property type="entry name" value="RimP_N"/>
</dbReference>
<dbReference type="InterPro" id="IPR035956">
    <property type="entry name" value="RimP_N_sf"/>
</dbReference>
<dbReference type="NCBIfam" id="NF000928">
    <property type="entry name" value="PRK00092.1-2"/>
    <property type="match status" value="1"/>
</dbReference>
<dbReference type="PANTHER" id="PTHR33867">
    <property type="entry name" value="RIBOSOME MATURATION FACTOR RIMP"/>
    <property type="match status" value="1"/>
</dbReference>
<dbReference type="PANTHER" id="PTHR33867:SF1">
    <property type="entry name" value="RIBOSOME MATURATION FACTOR RIMP"/>
    <property type="match status" value="1"/>
</dbReference>
<dbReference type="Pfam" id="PF17384">
    <property type="entry name" value="DUF150_C"/>
    <property type="match status" value="1"/>
</dbReference>
<dbReference type="Pfam" id="PF02576">
    <property type="entry name" value="RimP_N"/>
    <property type="match status" value="1"/>
</dbReference>
<dbReference type="SUPFAM" id="SSF74942">
    <property type="entry name" value="YhbC-like, C-terminal domain"/>
    <property type="match status" value="1"/>
</dbReference>
<dbReference type="SUPFAM" id="SSF75420">
    <property type="entry name" value="YhbC-like, N-terminal domain"/>
    <property type="match status" value="1"/>
</dbReference>